<reference key="1">
    <citation type="journal article" date="2006" name="J. Bacteriol.">
        <title>Comparative genomic evidence for a close relationship between the dimorphic prosthecate bacteria Hyphomonas neptunium and Caulobacter crescentus.</title>
        <authorList>
            <person name="Badger J.H."/>
            <person name="Hoover T.R."/>
            <person name="Brun Y.V."/>
            <person name="Weiner R.M."/>
            <person name="Laub M.T."/>
            <person name="Alexandre G."/>
            <person name="Mrazek J."/>
            <person name="Ren Q."/>
            <person name="Paulsen I.T."/>
            <person name="Nelson K.E."/>
            <person name="Khouri H.M."/>
            <person name="Radune D."/>
            <person name="Sosa J."/>
            <person name="Dodson R.J."/>
            <person name="Sullivan S.A."/>
            <person name="Rosovitz M.J."/>
            <person name="Madupu R."/>
            <person name="Brinkac L.M."/>
            <person name="Durkin A.S."/>
            <person name="Daugherty S.C."/>
            <person name="Kothari S.P."/>
            <person name="Giglio M.G."/>
            <person name="Zhou L."/>
            <person name="Haft D.H."/>
            <person name="Selengut J.D."/>
            <person name="Davidsen T.M."/>
            <person name="Yang Q."/>
            <person name="Zafar N."/>
            <person name="Ward N.L."/>
        </authorList>
    </citation>
    <scope>NUCLEOTIDE SEQUENCE [LARGE SCALE GENOMIC DNA]</scope>
    <source>
        <strain>ATCC 15444</strain>
    </source>
</reference>
<protein>
    <recommendedName>
        <fullName evidence="1">Ribosomal RNA small subunit methyltransferase G</fullName>
        <ecNumber evidence="1">2.1.1.170</ecNumber>
    </recommendedName>
    <alternativeName>
        <fullName evidence="1">16S rRNA 7-methylguanosine methyltransferase</fullName>
        <shortName evidence="1">16S rRNA m7G methyltransferase</shortName>
    </alternativeName>
</protein>
<name>RSMG_HYPNA</name>
<feature type="chain" id="PRO_0000335363" description="Ribosomal RNA small subunit methyltransferase G">
    <location>
        <begin position="1"/>
        <end position="207"/>
    </location>
</feature>
<feature type="binding site" evidence="1">
    <location>
        <position position="74"/>
    </location>
    <ligand>
        <name>S-adenosyl-L-methionine</name>
        <dbReference type="ChEBI" id="CHEBI:59789"/>
    </ligand>
</feature>
<feature type="binding site" evidence="1">
    <location>
        <position position="79"/>
    </location>
    <ligand>
        <name>S-adenosyl-L-methionine</name>
        <dbReference type="ChEBI" id="CHEBI:59789"/>
    </ligand>
</feature>
<feature type="binding site" evidence="1">
    <location>
        <begin position="124"/>
        <end position="125"/>
    </location>
    <ligand>
        <name>S-adenosyl-L-methionine</name>
        <dbReference type="ChEBI" id="CHEBI:59789"/>
    </ligand>
</feature>
<feature type="binding site" evidence="1">
    <location>
        <position position="138"/>
    </location>
    <ligand>
        <name>S-adenosyl-L-methionine</name>
        <dbReference type="ChEBI" id="CHEBI:59789"/>
    </ligand>
</feature>
<evidence type="ECO:0000255" key="1">
    <source>
        <dbReference type="HAMAP-Rule" id="MF_00074"/>
    </source>
</evidence>
<sequence>MSERDDRAAFLAANDVSRETLDRLDRVIDTLDVWRQKSNLIGPKEWPQIWTRHVGDSWQLLDHIPETAHLVDLGSGAGFPGLIIAAARSLGHVTMIESVGKKCAFLRAAIQEADLSAAVHQGRVEAAPPIKAEFVTARAFAPLPELLDYAAPWLRKGAVGVFPKGERWNEELTAARQRWNFAYEAIPSRSGGSGVILIIREVARRND</sequence>
<keyword id="KW-0963">Cytoplasm</keyword>
<keyword id="KW-0489">Methyltransferase</keyword>
<keyword id="KW-1185">Reference proteome</keyword>
<keyword id="KW-0698">rRNA processing</keyword>
<keyword id="KW-0949">S-adenosyl-L-methionine</keyword>
<keyword id="KW-0808">Transferase</keyword>
<comment type="function">
    <text evidence="1">Specifically methylates the N7 position of guanine in position 527 of 16S rRNA.</text>
</comment>
<comment type="catalytic activity">
    <reaction evidence="1">
        <text>guanosine(527) in 16S rRNA + S-adenosyl-L-methionine = N(7)-methylguanosine(527) in 16S rRNA + S-adenosyl-L-homocysteine</text>
        <dbReference type="Rhea" id="RHEA:42732"/>
        <dbReference type="Rhea" id="RHEA-COMP:10209"/>
        <dbReference type="Rhea" id="RHEA-COMP:10210"/>
        <dbReference type="ChEBI" id="CHEBI:57856"/>
        <dbReference type="ChEBI" id="CHEBI:59789"/>
        <dbReference type="ChEBI" id="CHEBI:74269"/>
        <dbReference type="ChEBI" id="CHEBI:74480"/>
        <dbReference type="EC" id="2.1.1.170"/>
    </reaction>
</comment>
<comment type="subcellular location">
    <subcellularLocation>
        <location evidence="1">Cytoplasm</location>
    </subcellularLocation>
</comment>
<comment type="similarity">
    <text evidence="1">Belongs to the methyltransferase superfamily. RNA methyltransferase RsmG family.</text>
</comment>
<gene>
    <name evidence="1" type="primary">rsmG</name>
    <name type="ordered locus">HNE_3562</name>
</gene>
<accession>Q0BWB0</accession>
<dbReference type="EC" id="2.1.1.170" evidence="1"/>
<dbReference type="EMBL" id="CP000158">
    <property type="protein sequence ID" value="ABI77044.1"/>
    <property type="molecule type" value="Genomic_DNA"/>
</dbReference>
<dbReference type="RefSeq" id="WP_011648527.1">
    <property type="nucleotide sequence ID" value="NC_008358.1"/>
</dbReference>
<dbReference type="SMR" id="Q0BWB0"/>
<dbReference type="STRING" id="228405.HNE_3562"/>
<dbReference type="KEGG" id="hne:HNE_3562"/>
<dbReference type="eggNOG" id="COG0357">
    <property type="taxonomic scope" value="Bacteria"/>
</dbReference>
<dbReference type="HOGENOM" id="CLU_065341_1_1_5"/>
<dbReference type="Proteomes" id="UP000001959">
    <property type="component" value="Chromosome"/>
</dbReference>
<dbReference type="GO" id="GO:0005829">
    <property type="term" value="C:cytosol"/>
    <property type="evidence" value="ECO:0007669"/>
    <property type="project" value="TreeGrafter"/>
</dbReference>
<dbReference type="GO" id="GO:0070043">
    <property type="term" value="F:rRNA (guanine-N7-)-methyltransferase activity"/>
    <property type="evidence" value="ECO:0007669"/>
    <property type="project" value="UniProtKB-UniRule"/>
</dbReference>
<dbReference type="Gene3D" id="3.40.50.150">
    <property type="entry name" value="Vaccinia Virus protein VP39"/>
    <property type="match status" value="1"/>
</dbReference>
<dbReference type="HAMAP" id="MF_00074">
    <property type="entry name" value="16SrRNA_methyltr_G"/>
    <property type="match status" value="1"/>
</dbReference>
<dbReference type="InterPro" id="IPR003682">
    <property type="entry name" value="rRNA_ssu_MeTfrase_G"/>
</dbReference>
<dbReference type="InterPro" id="IPR029063">
    <property type="entry name" value="SAM-dependent_MTases_sf"/>
</dbReference>
<dbReference type="NCBIfam" id="TIGR00138">
    <property type="entry name" value="rsmG_gidB"/>
    <property type="match status" value="1"/>
</dbReference>
<dbReference type="PANTHER" id="PTHR31760">
    <property type="entry name" value="S-ADENOSYL-L-METHIONINE-DEPENDENT METHYLTRANSFERASES SUPERFAMILY PROTEIN"/>
    <property type="match status" value="1"/>
</dbReference>
<dbReference type="PANTHER" id="PTHR31760:SF0">
    <property type="entry name" value="S-ADENOSYL-L-METHIONINE-DEPENDENT METHYLTRANSFERASES SUPERFAMILY PROTEIN"/>
    <property type="match status" value="1"/>
</dbReference>
<dbReference type="Pfam" id="PF02527">
    <property type="entry name" value="GidB"/>
    <property type="match status" value="1"/>
</dbReference>
<dbReference type="PIRSF" id="PIRSF003078">
    <property type="entry name" value="GidB"/>
    <property type="match status" value="1"/>
</dbReference>
<dbReference type="SUPFAM" id="SSF53335">
    <property type="entry name" value="S-adenosyl-L-methionine-dependent methyltransferases"/>
    <property type="match status" value="1"/>
</dbReference>
<proteinExistence type="inferred from homology"/>
<organism>
    <name type="scientific">Hyphomonas neptunium (strain ATCC 15444)</name>
    <dbReference type="NCBI Taxonomy" id="228405"/>
    <lineage>
        <taxon>Bacteria</taxon>
        <taxon>Pseudomonadati</taxon>
        <taxon>Pseudomonadota</taxon>
        <taxon>Alphaproteobacteria</taxon>
        <taxon>Hyphomonadales</taxon>
        <taxon>Hyphomonadaceae</taxon>
        <taxon>Hyphomonas</taxon>
    </lineage>
</organism>